<organism>
    <name type="scientific">Dictyostelium discoideum</name>
    <name type="common">Social amoeba</name>
    <dbReference type="NCBI Taxonomy" id="44689"/>
    <lineage>
        <taxon>Eukaryota</taxon>
        <taxon>Amoebozoa</taxon>
        <taxon>Evosea</taxon>
        <taxon>Eumycetozoa</taxon>
        <taxon>Dictyostelia</taxon>
        <taxon>Dictyosteliales</taxon>
        <taxon>Dictyosteliaceae</taxon>
        <taxon>Dictyostelium</taxon>
    </lineage>
</organism>
<name>CBPA_DICDI</name>
<sequence>MDCAITKDVEDMLRKFDSNGDGNITFDEAVKRLKETGSKDPLRAASSMFISLDKDKDGIISIKEIHGHKADVAAKKLQKAINNICNNFLKGYDTDKDGRISWDEVCNWVNKNNPDAIAPLMIVENFFSELDKDNDRFVTKCELQEYVTKYKSLPEQ</sequence>
<gene>
    <name type="primary">cbpA</name>
    <name type="synonym">cbp1</name>
    <name type="synonym">cbpB</name>
    <name type="ORF">DDB_G0276759</name>
</gene>
<proteinExistence type="evidence at transcript level"/>
<protein>
    <recommendedName>
        <fullName>Calcium-binding protein A</fullName>
    </recommendedName>
    <alternativeName>
        <fullName>Calcium-binding protein 1</fullName>
    </alternativeName>
</protein>
<evidence type="ECO:0000255" key="1">
    <source>
        <dbReference type="PROSITE-ProRule" id="PRU00448"/>
    </source>
</evidence>
<evidence type="ECO:0000305" key="2"/>
<reference key="1">
    <citation type="journal article" date="1995" name="FEBS Lett.">
        <title>Cloning and expression in Escherichia coli of a cDNA encoding a developmentally regulated Ca(2+)-binding protein from Dictyostelium discoideum.</title>
        <authorList>
            <person name="Coukell B."/>
            <person name="Moniakis J."/>
            <person name="Grinberg A."/>
        </authorList>
    </citation>
    <scope>NUCLEOTIDE SEQUENCE [MRNA]</scope>
    <source>
        <strain>AX3</strain>
    </source>
</reference>
<reference key="2">
    <citation type="journal article" date="2002" name="Nature">
        <title>Sequence and analysis of chromosome 2 of Dictyostelium discoideum.</title>
        <authorList>
            <person name="Gloeckner G."/>
            <person name="Eichinger L."/>
            <person name="Szafranski K."/>
            <person name="Pachebat J.A."/>
            <person name="Bankier A.T."/>
            <person name="Dear P.H."/>
            <person name="Lehmann R."/>
            <person name="Baumgart C."/>
            <person name="Parra G."/>
            <person name="Abril J.F."/>
            <person name="Guigo R."/>
            <person name="Kumpf K."/>
            <person name="Tunggal B."/>
            <person name="Cox E.C."/>
            <person name="Quail M.A."/>
            <person name="Platzer M."/>
            <person name="Rosenthal A."/>
            <person name="Noegel A.A."/>
        </authorList>
    </citation>
    <scope>NUCLEOTIDE SEQUENCE [LARGE SCALE GENOMIC DNA]</scope>
    <source>
        <strain>AX4</strain>
    </source>
</reference>
<reference key="3">
    <citation type="journal article" date="2005" name="Nature">
        <title>The genome of the social amoeba Dictyostelium discoideum.</title>
        <authorList>
            <person name="Eichinger L."/>
            <person name="Pachebat J.A."/>
            <person name="Gloeckner G."/>
            <person name="Rajandream M.A."/>
            <person name="Sucgang R."/>
            <person name="Berriman M."/>
            <person name="Song J."/>
            <person name="Olsen R."/>
            <person name="Szafranski K."/>
            <person name="Xu Q."/>
            <person name="Tunggal B."/>
            <person name="Kummerfeld S."/>
            <person name="Madera M."/>
            <person name="Konfortov B.A."/>
            <person name="Rivero F."/>
            <person name="Bankier A.T."/>
            <person name="Lehmann R."/>
            <person name="Hamlin N."/>
            <person name="Davies R."/>
            <person name="Gaudet P."/>
            <person name="Fey P."/>
            <person name="Pilcher K."/>
            <person name="Chen G."/>
            <person name="Saunders D."/>
            <person name="Sodergren E.J."/>
            <person name="Davis P."/>
            <person name="Kerhornou A."/>
            <person name="Nie X."/>
            <person name="Hall N."/>
            <person name="Anjard C."/>
            <person name="Hemphill L."/>
            <person name="Bason N."/>
            <person name="Farbrother P."/>
            <person name="Desany B."/>
            <person name="Just E."/>
            <person name="Morio T."/>
            <person name="Rost R."/>
            <person name="Churcher C.M."/>
            <person name="Cooper J."/>
            <person name="Haydock S."/>
            <person name="van Driessche N."/>
            <person name="Cronin A."/>
            <person name="Goodhead I."/>
            <person name="Muzny D.M."/>
            <person name="Mourier T."/>
            <person name="Pain A."/>
            <person name="Lu M."/>
            <person name="Harper D."/>
            <person name="Lindsay R."/>
            <person name="Hauser H."/>
            <person name="James K.D."/>
            <person name="Quiles M."/>
            <person name="Madan Babu M."/>
            <person name="Saito T."/>
            <person name="Buchrieser C."/>
            <person name="Wardroper A."/>
            <person name="Felder M."/>
            <person name="Thangavelu M."/>
            <person name="Johnson D."/>
            <person name="Knights A."/>
            <person name="Loulseged H."/>
            <person name="Mungall K.L."/>
            <person name="Oliver K."/>
            <person name="Price C."/>
            <person name="Quail M.A."/>
            <person name="Urushihara H."/>
            <person name="Hernandez J."/>
            <person name="Rabbinowitsch E."/>
            <person name="Steffen D."/>
            <person name="Sanders M."/>
            <person name="Ma J."/>
            <person name="Kohara Y."/>
            <person name="Sharp S."/>
            <person name="Simmonds M.N."/>
            <person name="Spiegler S."/>
            <person name="Tivey A."/>
            <person name="Sugano S."/>
            <person name="White B."/>
            <person name="Walker D."/>
            <person name="Woodward J.R."/>
            <person name="Winckler T."/>
            <person name="Tanaka Y."/>
            <person name="Shaulsky G."/>
            <person name="Schleicher M."/>
            <person name="Weinstock G.M."/>
            <person name="Rosenthal A."/>
            <person name="Cox E.C."/>
            <person name="Chisholm R.L."/>
            <person name="Gibbs R.A."/>
            <person name="Loomis W.F."/>
            <person name="Platzer M."/>
            <person name="Kay R.R."/>
            <person name="Williams J.G."/>
            <person name="Dear P.H."/>
            <person name="Noegel A.A."/>
            <person name="Barrell B.G."/>
            <person name="Kuspa A."/>
        </authorList>
    </citation>
    <scope>NUCLEOTIDE SEQUENCE [LARGE SCALE GENOMIC DNA]</scope>
    <source>
        <strain>AX4</strain>
    </source>
</reference>
<keyword id="KW-0106">Calcium</keyword>
<keyword id="KW-0479">Metal-binding</keyword>
<keyword id="KW-1185">Reference proteome</keyword>
<keyword id="KW-0677">Repeat</keyword>
<feature type="chain" id="PRO_0000073851" description="Calcium-binding protein A">
    <location>
        <begin position="1"/>
        <end position="156"/>
    </location>
</feature>
<feature type="domain" description="EF-hand 1" evidence="1">
    <location>
        <begin position="4"/>
        <end position="39"/>
    </location>
</feature>
<feature type="domain" description="EF-hand 2" evidence="1">
    <location>
        <begin position="40"/>
        <end position="75"/>
    </location>
</feature>
<feature type="domain" description="EF-hand 3" evidence="1">
    <location>
        <begin position="80"/>
        <end position="115"/>
    </location>
</feature>
<feature type="domain" description="EF-hand 4" evidence="1">
    <location>
        <begin position="118"/>
        <end position="153"/>
    </location>
</feature>
<feature type="binding site" evidence="2">
    <location>
        <position position="17"/>
    </location>
    <ligand>
        <name>Ca(2+)</name>
        <dbReference type="ChEBI" id="CHEBI:29108"/>
        <label>1</label>
    </ligand>
</feature>
<feature type="binding site" evidence="2">
    <location>
        <position position="19"/>
    </location>
    <ligand>
        <name>Ca(2+)</name>
        <dbReference type="ChEBI" id="CHEBI:29108"/>
        <label>1</label>
    </ligand>
</feature>
<feature type="binding site" evidence="2">
    <location>
        <position position="21"/>
    </location>
    <ligand>
        <name>Ca(2+)</name>
        <dbReference type="ChEBI" id="CHEBI:29108"/>
        <label>1</label>
    </ligand>
</feature>
<feature type="binding site" evidence="2">
    <location>
        <position position="23"/>
    </location>
    <ligand>
        <name>Ca(2+)</name>
        <dbReference type="ChEBI" id="CHEBI:29108"/>
        <label>1</label>
    </ligand>
</feature>
<feature type="binding site" evidence="2">
    <location>
        <position position="28"/>
    </location>
    <ligand>
        <name>Ca(2+)</name>
        <dbReference type="ChEBI" id="CHEBI:29108"/>
        <label>1</label>
    </ligand>
</feature>
<feature type="binding site" evidence="1">
    <location>
        <position position="53"/>
    </location>
    <ligand>
        <name>Ca(2+)</name>
        <dbReference type="ChEBI" id="CHEBI:29108"/>
        <label>2</label>
    </ligand>
</feature>
<feature type="binding site" evidence="1">
    <location>
        <position position="55"/>
    </location>
    <ligand>
        <name>Ca(2+)</name>
        <dbReference type="ChEBI" id="CHEBI:29108"/>
        <label>2</label>
    </ligand>
</feature>
<feature type="binding site" evidence="1">
    <location>
        <position position="57"/>
    </location>
    <ligand>
        <name>Ca(2+)</name>
        <dbReference type="ChEBI" id="CHEBI:29108"/>
        <label>2</label>
    </ligand>
</feature>
<feature type="binding site" evidence="1">
    <location>
        <position position="64"/>
    </location>
    <ligand>
        <name>Ca(2+)</name>
        <dbReference type="ChEBI" id="CHEBI:29108"/>
        <label>2</label>
    </ligand>
</feature>
<feature type="binding site" evidence="1">
    <location>
        <position position="93"/>
    </location>
    <ligand>
        <name>Ca(2+)</name>
        <dbReference type="ChEBI" id="CHEBI:29108"/>
        <label>3</label>
    </ligand>
</feature>
<feature type="binding site" evidence="1">
    <location>
        <position position="95"/>
    </location>
    <ligand>
        <name>Ca(2+)</name>
        <dbReference type="ChEBI" id="CHEBI:29108"/>
        <label>3</label>
    </ligand>
</feature>
<feature type="binding site" evidence="1">
    <location>
        <position position="97"/>
    </location>
    <ligand>
        <name>Ca(2+)</name>
        <dbReference type="ChEBI" id="CHEBI:29108"/>
        <label>3</label>
    </ligand>
</feature>
<feature type="binding site" evidence="1">
    <location>
        <position position="99"/>
    </location>
    <ligand>
        <name>Ca(2+)</name>
        <dbReference type="ChEBI" id="CHEBI:29108"/>
        <label>3</label>
    </ligand>
</feature>
<feature type="binding site" evidence="1">
    <location>
        <position position="104"/>
    </location>
    <ligand>
        <name>Ca(2+)</name>
        <dbReference type="ChEBI" id="CHEBI:29108"/>
        <label>3</label>
    </ligand>
</feature>
<feature type="binding site" evidence="1">
    <location>
        <position position="131"/>
    </location>
    <ligand>
        <name>Ca(2+)</name>
        <dbReference type="ChEBI" id="CHEBI:29108"/>
        <label>4</label>
    </ligand>
</feature>
<feature type="binding site" evidence="1">
    <location>
        <position position="133"/>
    </location>
    <ligand>
        <name>Ca(2+)</name>
        <dbReference type="ChEBI" id="CHEBI:29108"/>
        <label>4</label>
    </ligand>
</feature>
<feature type="binding site" evidence="1">
    <location>
        <position position="135"/>
    </location>
    <ligand>
        <name>Ca(2+)</name>
        <dbReference type="ChEBI" id="CHEBI:29108"/>
        <label>4</label>
    </ligand>
</feature>
<feature type="binding site" evidence="1">
    <location>
        <position position="142"/>
    </location>
    <ligand>
        <name>Ca(2+)</name>
        <dbReference type="ChEBI" id="CHEBI:29108"/>
        <label>4</label>
    </ligand>
</feature>
<accession>P42529</accession>
<accession>Q550T3</accession>
<comment type="developmental stage">
    <text>Expressed preferentially during the multicellular stages of development.</text>
</comment>
<dbReference type="EMBL" id="X82784">
    <property type="protein sequence ID" value="CAA58025.1"/>
    <property type="molecule type" value="mRNA"/>
</dbReference>
<dbReference type="EMBL" id="AAFI02000019">
    <property type="protein sequence ID" value="EAL68881.1"/>
    <property type="molecule type" value="Genomic_DNA"/>
</dbReference>
<dbReference type="PIR" id="S68782">
    <property type="entry name" value="S49811"/>
</dbReference>
<dbReference type="RefSeq" id="XP_642849.1">
    <property type="nucleotide sequence ID" value="XM_637757.1"/>
</dbReference>
<dbReference type="SMR" id="P42529"/>
<dbReference type="STRING" id="44689.P42529"/>
<dbReference type="PaxDb" id="44689-DDB0185026"/>
<dbReference type="EnsemblProtists" id="EAL68881">
    <property type="protein sequence ID" value="EAL68881"/>
    <property type="gene ID" value="DDB_G0276759"/>
</dbReference>
<dbReference type="GeneID" id="8620713"/>
<dbReference type="KEGG" id="ddi:DDB_G0276759"/>
<dbReference type="dictyBase" id="DDB_G0276759">
    <property type="gene designation" value="cbpA"/>
</dbReference>
<dbReference type="VEuPathDB" id="AmoebaDB:DDB_G0276759"/>
<dbReference type="eggNOG" id="ENOG502RICA">
    <property type="taxonomic scope" value="Eukaryota"/>
</dbReference>
<dbReference type="HOGENOM" id="CLU_1689978_0_0_1"/>
<dbReference type="InParanoid" id="P42529"/>
<dbReference type="OMA" id="LMIVENF"/>
<dbReference type="PhylomeDB" id="P42529"/>
<dbReference type="PRO" id="PR:P42529"/>
<dbReference type="Proteomes" id="UP000002195">
    <property type="component" value="Chromosome 2"/>
</dbReference>
<dbReference type="GO" id="GO:0015629">
    <property type="term" value="C:actin cytoskeleton"/>
    <property type="evidence" value="ECO:0000314"/>
    <property type="project" value="dictyBase"/>
</dbReference>
<dbReference type="GO" id="GO:0031252">
    <property type="term" value="C:cell leading edge"/>
    <property type="evidence" value="ECO:0000314"/>
    <property type="project" value="dictyBase"/>
</dbReference>
<dbReference type="GO" id="GO:0031254">
    <property type="term" value="C:cell trailing edge"/>
    <property type="evidence" value="ECO:0000314"/>
    <property type="project" value="dictyBase"/>
</dbReference>
<dbReference type="GO" id="GO:0051015">
    <property type="term" value="F:actin filament binding"/>
    <property type="evidence" value="ECO:0000314"/>
    <property type="project" value="dictyBase"/>
</dbReference>
<dbReference type="GO" id="GO:0005509">
    <property type="term" value="F:calcium ion binding"/>
    <property type="evidence" value="ECO:0000314"/>
    <property type="project" value="dictyBase"/>
</dbReference>
<dbReference type="GO" id="GO:0048306">
    <property type="term" value="F:calcium-dependent protein binding"/>
    <property type="evidence" value="ECO:0000353"/>
    <property type="project" value="dictyBase"/>
</dbReference>
<dbReference type="GO" id="GO:0031152">
    <property type="term" value="P:aggregation involved in sorocarp development"/>
    <property type="evidence" value="ECO:0000315"/>
    <property type="project" value="dictyBase"/>
</dbReference>
<dbReference type="GO" id="GO:0048870">
    <property type="term" value="P:cell motility"/>
    <property type="evidence" value="ECO:0000315"/>
    <property type="project" value="dictyBase"/>
</dbReference>
<dbReference type="CDD" id="cd00051">
    <property type="entry name" value="EFh"/>
    <property type="match status" value="1"/>
</dbReference>
<dbReference type="Gene3D" id="1.10.238.10">
    <property type="entry name" value="EF-hand"/>
    <property type="match status" value="3"/>
</dbReference>
<dbReference type="InterPro" id="IPR011992">
    <property type="entry name" value="EF-hand-dom_pair"/>
</dbReference>
<dbReference type="InterPro" id="IPR018247">
    <property type="entry name" value="EF_Hand_1_Ca_BS"/>
</dbReference>
<dbReference type="InterPro" id="IPR002048">
    <property type="entry name" value="EF_hand_dom"/>
</dbReference>
<dbReference type="PANTHER" id="PTHR10827:SF85">
    <property type="entry name" value="CALCIUM-BINDING PROTEIN"/>
    <property type="match status" value="1"/>
</dbReference>
<dbReference type="PANTHER" id="PTHR10827">
    <property type="entry name" value="RETICULOCALBIN"/>
    <property type="match status" value="1"/>
</dbReference>
<dbReference type="Pfam" id="PF13202">
    <property type="entry name" value="EF-hand_5"/>
    <property type="match status" value="1"/>
</dbReference>
<dbReference type="Pfam" id="PF13499">
    <property type="entry name" value="EF-hand_7"/>
    <property type="match status" value="1"/>
</dbReference>
<dbReference type="SMART" id="SM00054">
    <property type="entry name" value="EFh"/>
    <property type="match status" value="4"/>
</dbReference>
<dbReference type="SUPFAM" id="SSF47473">
    <property type="entry name" value="EF-hand"/>
    <property type="match status" value="1"/>
</dbReference>
<dbReference type="PROSITE" id="PS00018">
    <property type="entry name" value="EF_HAND_1"/>
    <property type="match status" value="3"/>
</dbReference>
<dbReference type="PROSITE" id="PS50222">
    <property type="entry name" value="EF_HAND_2"/>
    <property type="match status" value="4"/>
</dbReference>